<accession>Q0T8I5</accession>
<organism>
    <name type="scientific">Shigella flexneri serotype 5b (strain 8401)</name>
    <dbReference type="NCBI Taxonomy" id="373384"/>
    <lineage>
        <taxon>Bacteria</taxon>
        <taxon>Pseudomonadati</taxon>
        <taxon>Pseudomonadota</taxon>
        <taxon>Gammaproteobacteria</taxon>
        <taxon>Enterobacterales</taxon>
        <taxon>Enterobacteriaceae</taxon>
        <taxon>Shigella</taxon>
    </lineage>
</organism>
<comment type="function">
    <text evidence="1">Catalyzes the ATP-dependent phosphorylation of L-homoserine to L-homoserine phosphate.</text>
</comment>
<comment type="catalytic activity">
    <reaction evidence="1">
        <text>L-homoserine + ATP = O-phospho-L-homoserine + ADP + H(+)</text>
        <dbReference type="Rhea" id="RHEA:13985"/>
        <dbReference type="ChEBI" id="CHEBI:15378"/>
        <dbReference type="ChEBI" id="CHEBI:30616"/>
        <dbReference type="ChEBI" id="CHEBI:57476"/>
        <dbReference type="ChEBI" id="CHEBI:57590"/>
        <dbReference type="ChEBI" id="CHEBI:456216"/>
        <dbReference type="EC" id="2.7.1.39"/>
    </reaction>
</comment>
<comment type="pathway">
    <text evidence="1">Amino-acid biosynthesis; L-threonine biosynthesis; L-threonine from L-aspartate: step 4/5.</text>
</comment>
<comment type="subcellular location">
    <subcellularLocation>
        <location evidence="1">Cytoplasm</location>
    </subcellularLocation>
</comment>
<comment type="similarity">
    <text evidence="1">Belongs to the GHMP kinase family. Homoserine kinase subfamily.</text>
</comment>
<keyword id="KW-0028">Amino-acid biosynthesis</keyword>
<keyword id="KW-0067">ATP-binding</keyword>
<keyword id="KW-0963">Cytoplasm</keyword>
<keyword id="KW-0418">Kinase</keyword>
<keyword id="KW-0547">Nucleotide-binding</keyword>
<keyword id="KW-0791">Threonine biosynthesis</keyword>
<keyword id="KW-0808">Transferase</keyword>
<feature type="chain" id="PRO_1000049165" description="Homoserine kinase">
    <location>
        <begin position="1"/>
        <end position="310"/>
    </location>
</feature>
<feature type="binding site" evidence="1">
    <location>
        <begin position="91"/>
        <end position="101"/>
    </location>
    <ligand>
        <name>ATP</name>
        <dbReference type="ChEBI" id="CHEBI:30616"/>
    </ligand>
</feature>
<sequence length="310" mass="33580">MVKVYAPASSANMSVGFDVLGAAVAPVDGALLGDVVTVEAAETFSLNNLGRFADKLPSEPRENIVYQCWERFCQELGKQIPVAMTLEKNMPIGSGLGSSACSVVAALMAMNEHCGKPLNDTRLLALMGELEGRISGSIHYDNVAPCFLGGMQLMIEENDIISQQVPGFDEWLWVLAYPGIKVSTAEARAILPAQYRRQDCIAHGRHLAGFIHACYSRQPELAAKLMKDVIAEPYRERLLPGFRQARQAVAEIGAVASGISGSGPTLFALCDKPDTAQRVADWLGKNYLQNQEGFVHICRLDTAGARVLEN</sequence>
<evidence type="ECO:0000255" key="1">
    <source>
        <dbReference type="HAMAP-Rule" id="MF_00384"/>
    </source>
</evidence>
<protein>
    <recommendedName>
        <fullName evidence="1">Homoserine kinase</fullName>
        <shortName evidence="1">HK</shortName>
        <shortName evidence="1">HSK</shortName>
        <ecNumber evidence="1">2.7.1.39</ecNumber>
    </recommendedName>
</protein>
<reference key="1">
    <citation type="journal article" date="2006" name="BMC Genomics">
        <title>Complete genome sequence of Shigella flexneri 5b and comparison with Shigella flexneri 2a.</title>
        <authorList>
            <person name="Nie H."/>
            <person name="Yang F."/>
            <person name="Zhang X."/>
            <person name="Yang J."/>
            <person name="Chen L."/>
            <person name="Wang J."/>
            <person name="Xiong Z."/>
            <person name="Peng J."/>
            <person name="Sun L."/>
            <person name="Dong J."/>
            <person name="Xue Y."/>
            <person name="Xu X."/>
            <person name="Chen S."/>
            <person name="Yao Z."/>
            <person name="Shen Y."/>
            <person name="Jin Q."/>
        </authorList>
    </citation>
    <scope>NUCLEOTIDE SEQUENCE [LARGE SCALE GENOMIC DNA]</scope>
    <source>
        <strain>8401</strain>
    </source>
</reference>
<gene>
    <name evidence="1" type="primary">thrB</name>
    <name type="ordered locus">SFV_0002</name>
</gene>
<dbReference type="EC" id="2.7.1.39" evidence="1"/>
<dbReference type="EMBL" id="CP000266">
    <property type="protein sequence ID" value="ABF02291.1"/>
    <property type="molecule type" value="Genomic_DNA"/>
</dbReference>
<dbReference type="RefSeq" id="WP_000241642.1">
    <property type="nucleotide sequence ID" value="NC_008258.1"/>
</dbReference>
<dbReference type="SMR" id="Q0T8I5"/>
<dbReference type="KEGG" id="sfv:SFV_0002"/>
<dbReference type="HOGENOM" id="CLU_041243_1_1_6"/>
<dbReference type="UniPathway" id="UPA00050">
    <property type="reaction ID" value="UER00064"/>
</dbReference>
<dbReference type="Proteomes" id="UP000000659">
    <property type="component" value="Chromosome"/>
</dbReference>
<dbReference type="GO" id="GO:0005737">
    <property type="term" value="C:cytoplasm"/>
    <property type="evidence" value="ECO:0007669"/>
    <property type="project" value="UniProtKB-SubCell"/>
</dbReference>
<dbReference type="GO" id="GO:0005524">
    <property type="term" value="F:ATP binding"/>
    <property type="evidence" value="ECO:0007669"/>
    <property type="project" value="UniProtKB-UniRule"/>
</dbReference>
<dbReference type="GO" id="GO:0004413">
    <property type="term" value="F:homoserine kinase activity"/>
    <property type="evidence" value="ECO:0007669"/>
    <property type="project" value="UniProtKB-UniRule"/>
</dbReference>
<dbReference type="GO" id="GO:0009088">
    <property type="term" value="P:threonine biosynthetic process"/>
    <property type="evidence" value="ECO:0007669"/>
    <property type="project" value="UniProtKB-UniRule"/>
</dbReference>
<dbReference type="FunFam" id="3.30.230.10:FF:000020">
    <property type="entry name" value="Homoserine kinase"/>
    <property type="match status" value="1"/>
</dbReference>
<dbReference type="FunFam" id="3.30.70.890:FF:000002">
    <property type="entry name" value="Homoserine kinase"/>
    <property type="match status" value="1"/>
</dbReference>
<dbReference type="Gene3D" id="3.30.230.10">
    <property type="match status" value="1"/>
</dbReference>
<dbReference type="Gene3D" id="3.30.70.890">
    <property type="entry name" value="GHMP kinase, C-terminal domain"/>
    <property type="match status" value="1"/>
</dbReference>
<dbReference type="HAMAP" id="MF_00384">
    <property type="entry name" value="Homoser_kinase"/>
    <property type="match status" value="1"/>
</dbReference>
<dbReference type="InterPro" id="IPR013750">
    <property type="entry name" value="GHMP_kinase_C_dom"/>
</dbReference>
<dbReference type="InterPro" id="IPR036554">
    <property type="entry name" value="GHMP_kinase_C_sf"/>
</dbReference>
<dbReference type="InterPro" id="IPR006204">
    <property type="entry name" value="GHMP_kinase_N_dom"/>
</dbReference>
<dbReference type="InterPro" id="IPR006203">
    <property type="entry name" value="GHMP_knse_ATP-bd_CS"/>
</dbReference>
<dbReference type="InterPro" id="IPR000870">
    <property type="entry name" value="Homoserine_kinase"/>
</dbReference>
<dbReference type="InterPro" id="IPR020568">
    <property type="entry name" value="Ribosomal_Su5_D2-typ_SF"/>
</dbReference>
<dbReference type="InterPro" id="IPR014721">
    <property type="entry name" value="Ribsml_uS5_D2-typ_fold_subgr"/>
</dbReference>
<dbReference type="NCBIfam" id="NF002288">
    <property type="entry name" value="PRK01212.1-4"/>
    <property type="match status" value="1"/>
</dbReference>
<dbReference type="NCBIfam" id="TIGR00191">
    <property type="entry name" value="thrB"/>
    <property type="match status" value="1"/>
</dbReference>
<dbReference type="PANTHER" id="PTHR20861:SF1">
    <property type="entry name" value="HOMOSERINE KINASE"/>
    <property type="match status" value="1"/>
</dbReference>
<dbReference type="PANTHER" id="PTHR20861">
    <property type="entry name" value="HOMOSERINE/4-DIPHOSPHOCYTIDYL-2-C-METHYL-D-ERYTHRITOL KINASE"/>
    <property type="match status" value="1"/>
</dbReference>
<dbReference type="Pfam" id="PF08544">
    <property type="entry name" value="GHMP_kinases_C"/>
    <property type="match status" value="1"/>
</dbReference>
<dbReference type="Pfam" id="PF00288">
    <property type="entry name" value="GHMP_kinases_N"/>
    <property type="match status" value="1"/>
</dbReference>
<dbReference type="PIRSF" id="PIRSF000676">
    <property type="entry name" value="Homoser_kin"/>
    <property type="match status" value="1"/>
</dbReference>
<dbReference type="PRINTS" id="PR00958">
    <property type="entry name" value="HOMSERKINASE"/>
</dbReference>
<dbReference type="SUPFAM" id="SSF55060">
    <property type="entry name" value="GHMP Kinase, C-terminal domain"/>
    <property type="match status" value="1"/>
</dbReference>
<dbReference type="SUPFAM" id="SSF54211">
    <property type="entry name" value="Ribosomal protein S5 domain 2-like"/>
    <property type="match status" value="1"/>
</dbReference>
<dbReference type="PROSITE" id="PS00627">
    <property type="entry name" value="GHMP_KINASES_ATP"/>
    <property type="match status" value="1"/>
</dbReference>
<name>KHSE_SHIF8</name>
<proteinExistence type="inferred from homology"/>